<accession>P55462</accession>
<dbReference type="EC" id="4.2.1.46"/>
<dbReference type="EMBL" id="U00090">
    <property type="protein sequence ID" value="AAB91680.1"/>
    <property type="molecule type" value="Genomic_DNA"/>
</dbReference>
<dbReference type="RefSeq" id="NP_443868.1">
    <property type="nucleotide sequence ID" value="NC_000914.2"/>
</dbReference>
<dbReference type="RefSeq" id="WP_010875372.1">
    <property type="nucleotide sequence ID" value="NC_000914.2"/>
</dbReference>
<dbReference type="SMR" id="P55462"/>
<dbReference type="KEGG" id="rhi:NGR_a03580"/>
<dbReference type="PATRIC" id="fig|394.7.peg.366"/>
<dbReference type="eggNOG" id="COG1088">
    <property type="taxonomic scope" value="Bacteria"/>
</dbReference>
<dbReference type="HOGENOM" id="CLU_007383_1_14_5"/>
<dbReference type="OrthoDB" id="9801785at2"/>
<dbReference type="UniPathway" id="UPA00124"/>
<dbReference type="Proteomes" id="UP000001054">
    <property type="component" value="Plasmid pNGR234a"/>
</dbReference>
<dbReference type="GO" id="GO:0008460">
    <property type="term" value="F:dTDP-glucose 4,6-dehydratase activity"/>
    <property type="evidence" value="ECO:0007669"/>
    <property type="project" value="UniProtKB-EC"/>
</dbReference>
<dbReference type="GO" id="GO:0019305">
    <property type="term" value="P:dTDP-rhamnose biosynthetic process"/>
    <property type="evidence" value="ECO:0007669"/>
    <property type="project" value="UniProtKB-UniPathway"/>
</dbReference>
<dbReference type="CDD" id="cd05246">
    <property type="entry name" value="dTDP_GD_SDR_e"/>
    <property type="match status" value="1"/>
</dbReference>
<dbReference type="Gene3D" id="3.40.50.720">
    <property type="entry name" value="NAD(P)-binding Rossmann-like Domain"/>
    <property type="match status" value="1"/>
</dbReference>
<dbReference type="Gene3D" id="3.90.25.10">
    <property type="entry name" value="UDP-galactose 4-epimerase, domain 1"/>
    <property type="match status" value="1"/>
</dbReference>
<dbReference type="InterPro" id="IPR005888">
    <property type="entry name" value="dTDP_Gluc_deHydtase"/>
</dbReference>
<dbReference type="InterPro" id="IPR016040">
    <property type="entry name" value="NAD(P)-bd_dom"/>
</dbReference>
<dbReference type="InterPro" id="IPR036291">
    <property type="entry name" value="NAD(P)-bd_dom_sf"/>
</dbReference>
<dbReference type="NCBIfam" id="TIGR01181">
    <property type="entry name" value="dTDP_gluc_dehyt"/>
    <property type="match status" value="1"/>
</dbReference>
<dbReference type="PANTHER" id="PTHR43000">
    <property type="entry name" value="DTDP-D-GLUCOSE 4,6-DEHYDRATASE-RELATED"/>
    <property type="match status" value="1"/>
</dbReference>
<dbReference type="Pfam" id="PF16363">
    <property type="entry name" value="GDP_Man_Dehyd"/>
    <property type="match status" value="1"/>
</dbReference>
<dbReference type="SUPFAM" id="SSF51735">
    <property type="entry name" value="NAD(P)-binding Rossmann-fold domains"/>
    <property type="match status" value="1"/>
</dbReference>
<keyword id="KW-0456">Lyase</keyword>
<keyword id="KW-0520">NAD</keyword>
<keyword id="KW-0614">Plasmid</keyword>
<keyword id="KW-1185">Reference proteome</keyword>
<sequence length="350" mass="39665">MRILVTGGAGFIGSALVRYLVSINAEVLNVDKLTYAGNLASLKPVEGLRNYRFLRADICDRVAINEAFETFQPDYVIHLAAESHVDRSITGADDFVQTNVNGTFTMLETARQYWSNLSQNRKAFFKMLHVSTDEVYGSLGDRGQFEEVSPYDPSSPYSASKAASDHFATAWQRTYGLPVVISNCSNNYGPFHFPEKLIPLMILNALDRKPLPVYGTGSNIRDWLYVDDHARALWLIVREGRPGEKYNVGGRNELRNIDVVNRICLLLDELSPNASHYGDLITFVKDRPGHDARYAIDATKLETELGWKAQENFDTGIRKTVEWYLENGWWWQPLRDKVYSGERLGLLEKA</sequence>
<comment type="catalytic activity">
    <reaction>
        <text>dTDP-alpha-D-glucose = dTDP-4-dehydro-6-deoxy-alpha-D-glucose + H2O</text>
        <dbReference type="Rhea" id="RHEA:17221"/>
        <dbReference type="ChEBI" id="CHEBI:15377"/>
        <dbReference type="ChEBI" id="CHEBI:57477"/>
        <dbReference type="ChEBI" id="CHEBI:57649"/>
        <dbReference type="EC" id="4.2.1.46"/>
    </reaction>
</comment>
<comment type="cofactor">
    <cofactor>
        <name>NAD(+)</name>
        <dbReference type="ChEBI" id="CHEBI:57540"/>
    </cofactor>
</comment>
<comment type="pathway">
    <text>Carbohydrate biosynthesis; dTDP-L-rhamnose biosynthesis.</text>
</comment>
<comment type="similarity">
    <text evidence="3">Belongs to the NAD(P)-dependent epimerase/dehydratase family. dTDP-glucose dehydratase subfamily.</text>
</comment>
<organism>
    <name type="scientific">Sinorhizobium fredii (strain NBRC 101917 / NGR234)</name>
    <dbReference type="NCBI Taxonomy" id="394"/>
    <lineage>
        <taxon>Bacteria</taxon>
        <taxon>Pseudomonadati</taxon>
        <taxon>Pseudomonadota</taxon>
        <taxon>Alphaproteobacteria</taxon>
        <taxon>Hyphomicrobiales</taxon>
        <taxon>Rhizobiaceae</taxon>
        <taxon>Sinorhizobium/Ensifer group</taxon>
        <taxon>Sinorhizobium</taxon>
    </lineage>
</organism>
<geneLocation type="plasmid">
    <name>sym pNGR234a</name>
</geneLocation>
<evidence type="ECO:0000250" key="1"/>
<evidence type="ECO:0000255" key="2"/>
<evidence type="ECO:0000305" key="3"/>
<feature type="chain" id="PRO_0000183246" description="Probable dTDP-glucose 4,6-dehydratase">
    <location>
        <begin position="1"/>
        <end position="350"/>
    </location>
</feature>
<feature type="active site" description="Proton donor" evidence="1">
    <location>
        <position position="133"/>
    </location>
</feature>
<feature type="active site" description="Proton acceptor" evidence="1">
    <location>
        <position position="134"/>
    </location>
</feature>
<feature type="active site" description="Proton acceptor" evidence="1">
    <location>
        <position position="157"/>
    </location>
</feature>
<feature type="binding site" evidence="2">
    <location>
        <begin position="7"/>
        <end position="13"/>
    </location>
    <ligand>
        <name>NAD(+)</name>
        <dbReference type="ChEBI" id="CHEBI:57540"/>
    </ligand>
</feature>
<feature type="binding site" evidence="1">
    <location>
        <position position="132"/>
    </location>
    <ligand>
        <name>substrate</name>
    </ligand>
</feature>
<name>RFBB_SINFN</name>
<gene>
    <name type="ordered locus">NGR_a03580</name>
    <name type="ORF">y4gF</name>
</gene>
<reference key="1">
    <citation type="journal article" date="1997" name="Nature">
        <title>Molecular basis of symbiosis between Rhizobium and legumes.</title>
        <authorList>
            <person name="Freiberg C.A."/>
            <person name="Fellay R."/>
            <person name="Bairoch A."/>
            <person name="Broughton W.J."/>
            <person name="Rosenthal A."/>
            <person name="Perret X."/>
        </authorList>
    </citation>
    <scope>NUCLEOTIDE SEQUENCE [LARGE SCALE GENOMIC DNA]</scope>
    <source>
        <strain>NBRC 101917 / NGR234</strain>
    </source>
</reference>
<reference key="2">
    <citation type="journal article" date="2009" name="Appl. Environ. Microbiol.">
        <title>Rhizobium sp. strain NGR234 possesses a remarkable number of secretion systems.</title>
        <authorList>
            <person name="Schmeisser C."/>
            <person name="Liesegang H."/>
            <person name="Krysciak D."/>
            <person name="Bakkou N."/>
            <person name="Le Quere A."/>
            <person name="Wollherr A."/>
            <person name="Heinemeyer I."/>
            <person name="Morgenstern B."/>
            <person name="Pommerening-Roeser A."/>
            <person name="Flores M."/>
            <person name="Palacios R."/>
            <person name="Brenner S."/>
            <person name="Gottschalk G."/>
            <person name="Schmitz R.A."/>
            <person name="Broughton W.J."/>
            <person name="Perret X."/>
            <person name="Strittmatter A.W."/>
            <person name="Streit W.R."/>
        </authorList>
    </citation>
    <scope>NUCLEOTIDE SEQUENCE [LARGE SCALE GENOMIC DNA]</scope>
    <source>
        <strain>NBRC 101917 / NGR234</strain>
    </source>
</reference>
<proteinExistence type="inferred from homology"/>
<protein>
    <recommendedName>
        <fullName>Probable dTDP-glucose 4,6-dehydratase</fullName>
        <ecNumber>4.2.1.46</ecNumber>
    </recommendedName>
</protein>